<protein>
    <recommendedName>
        <fullName evidence="1">TDP-N-acetylfucosamine:lipid II N-acetylfucosaminyltransferase</fullName>
        <ecNumber evidence="1">2.4.1.325</ecNumber>
    </recommendedName>
    <alternativeName>
        <fullName evidence="1">4-alpha-L-fucosyltransferase</fullName>
    </alternativeName>
    <alternativeName>
        <fullName evidence="1">TDP-Fuc4NAc:lipid II Fuc4NAc transferase</fullName>
        <shortName evidence="1">Fuc4NAc transferase</shortName>
    </alternativeName>
</protein>
<dbReference type="EC" id="2.4.1.325" evidence="1"/>
<dbReference type="EMBL" id="CP001657">
    <property type="protein sequence ID" value="ACT15017.1"/>
    <property type="molecule type" value="Genomic_DNA"/>
</dbReference>
<dbReference type="RefSeq" id="WP_015842097.1">
    <property type="nucleotide sequence ID" value="NC_012917.1"/>
</dbReference>
<dbReference type="SMR" id="C6DHE4"/>
<dbReference type="STRING" id="561230.PC1_4002"/>
<dbReference type="CAZy" id="GT56">
    <property type="family name" value="Glycosyltransferase Family 56"/>
</dbReference>
<dbReference type="KEGG" id="pct:PC1_4002"/>
<dbReference type="eggNOG" id="COG0554">
    <property type="taxonomic scope" value="Bacteria"/>
</dbReference>
<dbReference type="HOGENOM" id="CLU_066584_0_0_6"/>
<dbReference type="OrthoDB" id="6532169at2"/>
<dbReference type="UniPathway" id="UPA00566"/>
<dbReference type="Proteomes" id="UP000002736">
    <property type="component" value="Chromosome"/>
</dbReference>
<dbReference type="GO" id="GO:0005886">
    <property type="term" value="C:plasma membrane"/>
    <property type="evidence" value="ECO:0007669"/>
    <property type="project" value="UniProtKB-SubCell"/>
</dbReference>
<dbReference type="GO" id="GO:0102031">
    <property type="term" value="F:4-acetamido-4,6-dideoxy-D-galactose transferase activity"/>
    <property type="evidence" value="ECO:0007669"/>
    <property type="project" value="UniProtKB-EC"/>
</dbReference>
<dbReference type="GO" id="GO:0008417">
    <property type="term" value="F:fucosyltransferase activity"/>
    <property type="evidence" value="ECO:0007669"/>
    <property type="project" value="InterPro"/>
</dbReference>
<dbReference type="GO" id="GO:0009246">
    <property type="term" value="P:enterobacterial common antigen biosynthetic process"/>
    <property type="evidence" value="ECO:0007669"/>
    <property type="project" value="UniProtKB-UniRule"/>
</dbReference>
<dbReference type="GO" id="GO:0036065">
    <property type="term" value="P:fucosylation"/>
    <property type="evidence" value="ECO:0007669"/>
    <property type="project" value="InterPro"/>
</dbReference>
<dbReference type="HAMAP" id="MF_01002">
    <property type="entry name" value="WecF_RffT"/>
    <property type="match status" value="1"/>
</dbReference>
<dbReference type="InterPro" id="IPR009993">
    <property type="entry name" value="WecF"/>
</dbReference>
<dbReference type="NCBIfam" id="NF002753">
    <property type="entry name" value="PRK02797.1-2"/>
    <property type="match status" value="1"/>
</dbReference>
<dbReference type="Pfam" id="PF07429">
    <property type="entry name" value="Glyco_transf_56"/>
    <property type="match status" value="1"/>
</dbReference>
<keyword id="KW-0997">Cell inner membrane</keyword>
<keyword id="KW-1003">Cell membrane</keyword>
<keyword id="KW-0328">Glycosyltransferase</keyword>
<keyword id="KW-0472">Membrane</keyword>
<keyword id="KW-0808">Transferase</keyword>
<feature type="chain" id="PRO_1000213140" description="TDP-N-acetylfucosamine:lipid II N-acetylfucosaminyltransferase">
    <location>
        <begin position="1"/>
        <end position="361"/>
    </location>
</feature>
<sequence length="361" mass="41290">MTTLIHVLGSDIPHHNQTVLRFFNDVLATELPEQQIRHFIVASRDGISSADFPALRIETCVDKKTLAEAVIARAKANRNMRFFLHGQFNPTLWLALLSGKIKSEQVYWHVWGADLYEEASSLKYRLFYWLRRMAQKRVGHVFATRGDLAWYQQRAPRVPTSLLYFPTRMNPALTGMQVDKPLAGPMTILVGNSGDRTNRHQEALRAIHKQFGKNVRVIVPMGYPANNESYIAQVEGDGLALFGVKNFQLLKDQLAFDDYLNMLRTCDLGYFIFDRQQGIGTLCLLIQFGVPFVISRQNPFWQDLTEQNLPVLFYGDELDEALVREAQRQLASVDKHQIAFFNPNYLQGWRDALALAMGEPT</sequence>
<name>WECF_PECCP</name>
<comment type="function">
    <text evidence="1">Catalyzes the synthesis of Und-PP-GlcNAc-ManNAcA-Fuc4NAc (Lipid III), the third lipid-linked intermediate involved in ECA synthesis.</text>
</comment>
<comment type="catalytic activity">
    <reaction evidence="1">
        <text>beta-D-ManNAcA-(1-&gt;4)-alpha-D-GlcNAc-di-trans,octa-cis-undecaprenyl diphosphate + dTDP-4-acetamido-4,6-dideoxy-alpha-D-galactose = alpha-D-FucNAc4-(1-&gt;4)-beta-D-ManNAcA-(1-&gt;4)-D-GlcNAc-undecaprenyl diphosphate + dTDP + H(+)</text>
        <dbReference type="Rhea" id="RHEA:28759"/>
        <dbReference type="ChEBI" id="CHEBI:15378"/>
        <dbReference type="ChEBI" id="CHEBI:58369"/>
        <dbReference type="ChEBI" id="CHEBI:61495"/>
        <dbReference type="ChEBI" id="CHEBI:61496"/>
        <dbReference type="ChEBI" id="CHEBI:68493"/>
        <dbReference type="EC" id="2.4.1.325"/>
    </reaction>
</comment>
<comment type="pathway">
    <text evidence="1">Bacterial outer membrane biogenesis; enterobacterial common antigen biosynthesis.</text>
</comment>
<comment type="subcellular location">
    <subcellularLocation>
        <location evidence="1">Cell inner membrane</location>
        <topology evidence="1">Peripheral membrane protein</topology>
    </subcellularLocation>
</comment>
<comment type="similarity">
    <text evidence="1">Belongs to the glycosyltransferase 56 family.</text>
</comment>
<accession>C6DHE4</accession>
<organism>
    <name type="scientific">Pectobacterium carotovorum subsp. carotovorum (strain PC1)</name>
    <dbReference type="NCBI Taxonomy" id="561230"/>
    <lineage>
        <taxon>Bacteria</taxon>
        <taxon>Pseudomonadati</taxon>
        <taxon>Pseudomonadota</taxon>
        <taxon>Gammaproteobacteria</taxon>
        <taxon>Enterobacterales</taxon>
        <taxon>Pectobacteriaceae</taxon>
        <taxon>Pectobacterium</taxon>
    </lineage>
</organism>
<evidence type="ECO:0000255" key="1">
    <source>
        <dbReference type="HAMAP-Rule" id="MF_01002"/>
    </source>
</evidence>
<reference key="1">
    <citation type="submission" date="2009-07" db="EMBL/GenBank/DDBJ databases">
        <title>Complete sequence of Pectobacterium carotovorum subsp. carotovorum PC1.</title>
        <authorList>
            <consortium name="US DOE Joint Genome Institute"/>
            <person name="Lucas S."/>
            <person name="Copeland A."/>
            <person name="Lapidus A."/>
            <person name="Glavina del Rio T."/>
            <person name="Tice H."/>
            <person name="Bruce D."/>
            <person name="Goodwin L."/>
            <person name="Pitluck S."/>
            <person name="Munk A.C."/>
            <person name="Brettin T."/>
            <person name="Detter J.C."/>
            <person name="Han C."/>
            <person name="Tapia R."/>
            <person name="Larimer F."/>
            <person name="Land M."/>
            <person name="Hauser L."/>
            <person name="Kyrpides N."/>
            <person name="Mikhailova N."/>
            <person name="Balakrishnan V."/>
            <person name="Glasner J."/>
            <person name="Perna N.T."/>
        </authorList>
    </citation>
    <scope>NUCLEOTIDE SEQUENCE [LARGE SCALE GENOMIC DNA]</scope>
    <source>
        <strain>PC1</strain>
    </source>
</reference>
<proteinExistence type="inferred from homology"/>
<gene>
    <name evidence="1" type="primary">wecF</name>
    <name evidence="1" type="synonym">rffT</name>
    <name type="ordered locus">PC1_4002</name>
</gene>